<feature type="chain" id="PRO_1000015507" description="Deoxyuridine 5'-triphosphate nucleotidohydrolase">
    <location>
        <begin position="1"/>
        <end position="150"/>
    </location>
</feature>
<feature type="binding site" evidence="1">
    <location>
        <begin position="68"/>
        <end position="70"/>
    </location>
    <ligand>
        <name>substrate</name>
    </ligand>
</feature>
<feature type="binding site" evidence="1">
    <location>
        <position position="81"/>
    </location>
    <ligand>
        <name>substrate</name>
    </ligand>
</feature>
<feature type="binding site" evidence="1">
    <location>
        <begin position="85"/>
        <end position="87"/>
    </location>
    <ligand>
        <name>substrate</name>
    </ligand>
</feature>
<feature type="binding site" evidence="1">
    <location>
        <position position="95"/>
    </location>
    <ligand>
        <name>substrate</name>
    </ligand>
</feature>
<evidence type="ECO:0000255" key="1">
    <source>
        <dbReference type="HAMAP-Rule" id="MF_00116"/>
    </source>
</evidence>
<gene>
    <name evidence="1" type="primary">dut</name>
    <name type="ordered locus">A1I_06125</name>
</gene>
<dbReference type="EC" id="3.6.1.23" evidence="1"/>
<dbReference type="EMBL" id="CP000849">
    <property type="protein sequence ID" value="ABV79545.1"/>
    <property type="molecule type" value="Genomic_DNA"/>
</dbReference>
<dbReference type="RefSeq" id="WP_011477024.1">
    <property type="nucleotide sequence ID" value="NC_009883.1"/>
</dbReference>
<dbReference type="SMR" id="A8GXE5"/>
<dbReference type="KEGG" id="rbo:A1I_06125"/>
<dbReference type="HOGENOM" id="CLU_068508_1_2_5"/>
<dbReference type="UniPathway" id="UPA00610">
    <property type="reaction ID" value="UER00666"/>
</dbReference>
<dbReference type="GO" id="GO:0004170">
    <property type="term" value="F:dUTP diphosphatase activity"/>
    <property type="evidence" value="ECO:0007669"/>
    <property type="project" value="UniProtKB-UniRule"/>
</dbReference>
<dbReference type="GO" id="GO:0000287">
    <property type="term" value="F:magnesium ion binding"/>
    <property type="evidence" value="ECO:0007669"/>
    <property type="project" value="UniProtKB-UniRule"/>
</dbReference>
<dbReference type="GO" id="GO:0006226">
    <property type="term" value="P:dUMP biosynthetic process"/>
    <property type="evidence" value="ECO:0007669"/>
    <property type="project" value="UniProtKB-UniRule"/>
</dbReference>
<dbReference type="GO" id="GO:0046081">
    <property type="term" value="P:dUTP catabolic process"/>
    <property type="evidence" value="ECO:0007669"/>
    <property type="project" value="InterPro"/>
</dbReference>
<dbReference type="CDD" id="cd07557">
    <property type="entry name" value="trimeric_dUTPase"/>
    <property type="match status" value="1"/>
</dbReference>
<dbReference type="FunFam" id="2.70.40.10:FF:000002">
    <property type="entry name" value="dUTP diphosphatase"/>
    <property type="match status" value="1"/>
</dbReference>
<dbReference type="Gene3D" id="2.70.40.10">
    <property type="match status" value="1"/>
</dbReference>
<dbReference type="HAMAP" id="MF_00116">
    <property type="entry name" value="dUTPase_bact"/>
    <property type="match status" value="1"/>
</dbReference>
<dbReference type="InterPro" id="IPR008181">
    <property type="entry name" value="dUTPase"/>
</dbReference>
<dbReference type="InterPro" id="IPR029054">
    <property type="entry name" value="dUTPase-like"/>
</dbReference>
<dbReference type="InterPro" id="IPR036157">
    <property type="entry name" value="dUTPase-like_sf"/>
</dbReference>
<dbReference type="InterPro" id="IPR033704">
    <property type="entry name" value="dUTPase_trimeric"/>
</dbReference>
<dbReference type="NCBIfam" id="TIGR00576">
    <property type="entry name" value="dut"/>
    <property type="match status" value="1"/>
</dbReference>
<dbReference type="NCBIfam" id="NF001862">
    <property type="entry name" value="PRK00601.1"/>
    <property type="match status" value="1"/>
</dbReference>
<dbReference type="PANTHER" id="PTHR11241">
    <property type="entry name" value="DEOXYURIDINE 5'-TRIPHOSPHATE NUCLEOTIDOHYDROLASE"/>
    <property type="match status" value="1"/>
</dbReference>
<dbReference type="PANTHER" id="PTHR11241:SF0">
    <property type="entry name" value="DEOXYURIDINE 5'-TRIPHOSPHATE NUCLEOTIDOHYDROLASE"/>
    <property type="match status" value="1"/>
</dbReference>
<dbReference type="Pfam" id="PF00692">
    <property type="entry name" value="dUTPase"/>
    <property type="match status" value="1"/>
</dbReference>
<dbReference type="SUPFAM" id="SSF51283">
    <property type="entry name" value="dUTPase-like"/>
    <property type="match status" value="1"/>
</dbReference>
<protein>
    <recommendedName>
        <fullName evidence="1">Deoxyuridine 5'-triphosphate nucleotidohydrolase</fullName>
        <shortName evidence="1">dUTPase</shortName>
        <ecNumber evidence="1">3.6.1.23</ecNumber>
    </recommendedName>
    <alternativeName>
        <fullName evidence="1">dUTP pyrophosphatase</fullName>
    </alternativeName>
</protein>
<accession>A8GXE5</accession>
<sequence length="150" mass="16273">MTITQVKVKKLDNFFGKLPEYATDHSAGMDLTAANEQPITIKAGEIQLIPTGIAIALPELFEAQIRPRSGLAAKNGITVANSPGTIDADYRGEIKVILINLGKDDFVIEKGMRIAQMVISKYERISWKESETLEETARGSGGFGSTGVYL</sequence>
<reference key="1">
    <citation type="submission" date="2007-09" db="EMBL/GenBank/DDBJ databases">
        <title>Complete genome sequencing of Rickettsia bellii.</title>
        <authorList>
            <person name="Madan A."/>
            <person name="Lee H."/>
            <person name="Madan A."/>
            <person name="Yoon J.-G."/>
            <person name="Ryu G.-Y."/>
            <person name="Dasch G."/>
            <person name="Ereemeva M."/>
        </authorList>
    </citation>
    <scope>NUCLEOTIDE SEQUENCE [LARGE SCALE GENOMIC DNA]</scope>
    <source>
        <strain>OSU 85-389</strain>
    </source>
</reference>
<organism>
    <name type="scientific">Rickettsia bellii (strain OSU 85-389)</name>
    <dbReference type="NCBI Taxonomy" id="391896"/>
    <lineage>
        <taxon>Bacteria</taxon>
        <taxon>Pseudomonadati</taxon>
        <taxon>Pseudomonadota</taxon>
        <taxon>Alphaproteobacteria</taxon>
        <taxon>Rickettsiales</taxon>
        <taxon>Rickettsiaceae</taxon>
        <taxon>Rickettsieae</taxon>
        <taxon>Rickettsia</taxon>
        <taxon>belli group</taxon>
    </lineage>
</organism>
<name>DUT_RICB8</name>
<keyword id="KW-0378">Hydrolase</keyword>
<keyword id="KW-0460">Magnesium</keyword>
<keyword id="KW-0479">Metal-binding</keyword>
<keyword id="KW-0546">Nucleotide metabolism</keyword>
<proteinExistence type="inferred from homology"/>
<comment type="function">
    <text evidence="1">This enzyme is involved in nucleotide metabolism: it produces dUMP, the immediate precursor of thymidine nucleotides and it decreases the intracellular concentration of dUTP so that uracil cannot be incorporated into DNA.</text>
</comment>
<comment type="catalytic activity">
    <reaction evidence="1">
        <text>dUTP + H2O = dUMP + diphosphate + H(+)</text>
        <dbReference type="Rhea" id="RHEA:10248"/>
        <dbReference type="ChEBI" id="CHEBI:15377"/>
        <dbReference type="ChEBI" id="CHEBI:15378"/>
        <dbReference type="ChEBI" id="CHEBI:33019"/>
        <dbReference type="ChEBI" id="CHEBI:61555"/>
        <dbReference type="ChEBI" id="CHEBI:246422"/>
        <dbReference type="EC" id="3.6.1.23"/>
    </reaction>
</comment>
<comment type="cofactor">
    <cofactor evidence="1">
        <name>Mg(2+)</name>
        <dbReference type="ChEBI" id="CHEBI:18420"/>
    </cofactor>
</comment>
<comment type="pathway">
    <text evidence="1">Pyrimidine metabolism; dUMP biosynthesis; dUMP from dCTP (dUTP route): step 2/2.</text>
</comment>
<comment type="similarity">
    <text evidence="1">Belongs to the dUTPase family.</text>
</comment>